<dbReference type="EMBL" id="CH476606">
    <property type="protein sequence ID" value="EAU31135.1"/>
    <property type="molecule type" value="Genomic_DNA"/>
</dbReference>
<dbReference type="RefSeq" id="XP_001217589.1">
    <property type="nucleotide sequence ID" value="XM_001217588.1"/>
</dbReference>
<dbReference type="SMR" id="Q0CBD1"/>
<dbReference type="STRING" id="341663.Q0CBD1"/>
<dbReference type="EnsemblFungi" id="EAU31135">
    <property type="protein sequence ID" value="EAU31135"/>
    <property type="gene ID" value="ATEG_09003"/>
</dbReference>
<dbReference type="GeneID" id="4323164"/>
<dbReference type="VEuPathDB" id="FungiDB:ATEG_09003"/>
<dbReference type="eggNOG" id="KOG1744">
    <property type="taxonomic scope" value="Eukaryota"/>
</dbReference>
<dbReference type="HOGENOM" id="CLU_075666_1_3_1"/>
<dbReference type="OMA" id="FCPFAIR"/>
<dbReference type="OrthoDB" id="10254238at2759"/>
<dbReference type="Proteomes" id="UP000007963">
    <property type="component" value="Unassembled WGS sequence"/>
</dbReference>
<dbReference type="GO" id="GO:0000786">
    <property type="term" value="C:nucleosome"/>
    <property type="evidence" value="ECO:0007669"/>
    <property type="project" value="UniProtKB-KW"/>
</dbReference>
<dbReference type="GO" id="GO:0005634">
    <property type="term" value="C:nucleus"/>
    <property type="evidence" value="ECO:0007669"/>
    <property type="project" value="UniProtKB-SubCell"/>
</dbReference>
<dbReference type="GO" id="GO:0003677">
    <property type="term" value="F:DNA binding"/>
    <property type="evidence" value="ECO:0007669"/>
    <property type="project" value="UniProtKB-KW"/>
</dbReference>
<dbReference type="GO" id="GO:0046982">
    <property type="term" value="F:protein heterodimerization activity"/>
    <property type="evidence" value="ECO:0007669"/>
    <property type="project" value="InterPro"/>
</dbReference>
<dbReference type="GO" id="GO:0030527">
    <property type="term" value="F:structural constituent of chromatin"/>
    <property type="evidence" value="ECO:0007669"/>
    <property type="project" value="InterPro"/>
</dbReference>
<dbReference type="CDD" id="cd22910">
    <property type="entry name" value="HFD_H2B"/>
    <property type="match status" value="1"/>
</dbReference>
<dbReference type="FunFam" id="1.10.20.10:FF:000014">
    <property type="entry name" value="Histone H2B"/>
    <property type="match status" value="1"/>
</dbReference>
<dbReference type="Gene3D" id="1.10.20.10">
    <property type="entry name" value="Histone, subunit A"/>
    <property type="match status" value="1"/>
</dbReference>
<dbReference type="InterPro" id="IPR009072">
    <property type="entry name" value="Histone-fold"/>
</dbReference>
<dbReference type="InterPro" id="IPR007125">
    <property type="entry name" value="Histone_H2A/H2B/H3"/>
</dbReference>
<dbReference type="InterPro" id="IPR000558">
    <property type="entry name" value="Histone_H2B"/>
</dbReference>
<dbReference type="InterPro" id="IPR055333">
    <property type="entry name" value="HISTONE_H2B_site"/>
</dbReference>
<dbReference type="PANTHER" id="PTHR23428">
    <property type="entry name" value="HISTONE H2B"/>
    <property type="match status" value="1"/>
</dbReference>
<dbReference type="Pfam" id="PF00125">
    <property type="entry name" value="Histone"/>
    <property type="match status" value="1"/>
</dbReference>
<dbReference type="PRINTS" id="PR00621">
    <property type="entry name" value="HISTONEH2B"/>
</dbReference>
<dbReference type="SMART" id="SM00427">
    <property type="entry name" value="H2B"/>
    <property type="match status" value="1"/>
</dbReference>
<dbReference type="SUPFAM" id="SSF47113">
    <property type="entry name" value="Histone-fold"/>
    <property type="match status" value="1"/>
</dbReference>
<dbReference type="PROSITE" id="PS00357">
    <property type="entry name" value="HISTONE_H2B"/>
    <property type="match status" value="1"/>
</dbReference>
<proteinExistence type="inferred from homology"/>
<keyword id="KW-0007">Acetylation</keyword>
<keyword id="KW-0158">Chromosome</keyword>
<keyword id="KW-0238">DNA-binding</keyword>
<keyword id="KW-1017">Isopeptide bond</keyword>
<keyword id="KW-0544">Nucleosome core</keyword>
<keyword id="KW-0539">Nucleus</keyword>
<keyword id="KW-1185">Reference proteome</keyword>
<keyword id="KW-0832">Ubl conjugation</keyword>
<accession>Q0CBD1</accession>
<evidence type="ECO:0000250" key="1"/>
<evidence type="ECO:0000256" key="2">
    <source>
        <dbReference type="SAM" id="MobiDB-lite"/>
    </source>
</evidence>
<evidence type="ECO:0000305" key="3"/>
<protein>
    <recommendedName>
        <fullName>Histone H2B</fullName>
    </recommendedName>
</protein>
<gene>
    <name type="primary">htb1</name>
    <name type="ORF">ATEG_09003</name>
</gene>
<feature type="initiator methionine" description="Removed" evidence="1">
    <location>
        <position position="1"/>
    </location>
</feature>
<feature type="chain" id="PRO_0000297847" description="Histone H2B">
    <location>
        <begin position="2"/>
        <end position="140"/>
    </location>
</feature>
<feature type="region of interest" description="Disordered" evidence="2">
    <location>
        <begin position="1"/>
        <end position="48"/>
    </location>
</feature>
<feature type="compositionally biased region" description="Basic and acidic residues" evidence="2">
    <location>
        <begin position="1"/>
        <end position="10"/>
    </location>
</feature>
<feature type="compositionally biased region" description="Low complexity" evidence="2">
    <location>
        <begin position="11"/>
        <end position="21"/>
    </location>
</feature>
<feature type="modified residue" description="N6-acetyllysine; alternate" evidence="1">
    <location>
        <position position="8"/>
    </location>
</feature>
<feature type="modified residue" description="N6-acetyllysine; alternate" evidence="1">
    <location>
        <position position="9"/>
    </location>
</feature>
<feature type="modified residue" description="N6-acetyllysine" evidence="1">
    <location>
        <position position="15"/>
    </location>
</feature>
<feature type="modified residue" description="N6-acetyllysine; alternate" evidence="1">
    <location>
        <position position="25"/>
    </location>
</feature>
<feature type="cross-link" description="Glycyl lysine isopeptide (Lys-Gly) (interchain with G-Cter in SUMO); alternate" evidence="1">
    <location>
        <position position="8"/>
    </location>
</feature>
<feature type="cross-link" description="Glycyl lysine isopeptide (Lys-Gly) (interchain with G-Cter in SUMO); alternate" evidence="1">
    <location>
        <position position="9"/>
    </location>
</feature>
<feature type="cross-link" description="Glycyl lysine isopeptide (Lys-Gly) (interchain with G-Cter in SUMO); alternate" evidence="1">
    <location>
        <position position="25"/>
    </location>
</feature>
<feature type="cross-link" description="Glycyl lysine isopeptide (Lys-Gly) (interchain with G-Cter in SUMO)" evidence="1">
    <location>
        <position position="26"/>
    </location>
</feature>
<feature type="cross-link" description="Glycyl lysine isopeptide (Lys-Gly) (interchain with G-Cter in ubiquitin)" evidence="1">
    <location>
        <position position="134"/>
    </location>
</feature>
<sequence>MPPKAAEKKPTTGGKAPAGKAPAEKKEAGKKTAAAASGDKKKRGKTRKETYSSYIYKVLKQVHPDTGISTRAMSILNSFVNDIFERVATEASKLAAYNKKSTISSREIQTSVRLILPGELAKHAVSEGTKAVTKYSSSAK</sequence>
<comment type="function">
    <text>Core component of nucleosome. Nucleosomes wrap and compact DNA into chromatin, limiting DNA accessibility to the cellular machineries which require DNA as a template. Histones thereby play a central role in transcription regulation, DNA repair, DNA replication and chromosomal stability. DNA accessibility is regulated via a complex set of post-translational modifications of histones, also called histone code, and nucleosome remodeling.</text>
</comment>
<comment type="subunit">
    <text>The nucleosome is a histone octamer containing two molecules each of H2A, H2B, H3 and H4 assembled in one H3-H4 heterotetramer and two H2A-H2B heterodimers. The octamer wraps approximately 147 bp of DNA.</text>
</comment>
<comment type="subcellular location">
    <subcellularLocation>
        <location evidence="1">Nucleus</location>
    </subcellularLocation>
    <subcellularLocation>
        <location evidence="1">Chromosome</location>
    </subcellularLocation>
</comment>
<comment type="PTM">
    <text evidence="1">Monoubiquitinated by the ubc2-bre1 complex to form H2BK123ub1. H2BK123ub1 gives a specific tag for epigenetic transcriptional activation and is also prerequisite for H3K4me and H3K79me formation. H2BK123ub1 also modulates the formation of double-strand breaks during meiosis and is a prerequisite for DNA-damage checkpoint activation (By similarity).</text>
</comment>
<comment type="PTM">
    <text evidence="1">Acetylated by gcn5 to form H2BK11ac and H2BK16ac. H2BK16ac can also be formed by esa1. Acetylation of N-terminal lysines and particularly formation of H2BK11acK16ac has a positive effect on transcription (By similarity).</text>
</comment>
<comment type="PTM">
    <text evidence="1">Sumoylation to form H2BK6su or H2BK7su, and probably also H2BK16su or H2BK17su, occurs preferentially near the telomeres and represses gene transcription.</text>
</comment>
<comment type="similarity">
    <text evidence="3">Belongs to the histone H2B family.</text>
</comment>
<comment type="caution">
    <text evidence="3">To ensure consistency between histone entries, we follow the 'Brno' nomenclature for histone modifications, with positions referring to those used in the literature for the 'closest' model organism. Due to slight variations in histone sequences between organisms and to the presence of initiator methionine in UniProtKB/Swiss-Prot sequences, the actual positions of modified amino acids in the sequence generally differ. In this entry the following conventions are used: H2BK6ac = acetylated Lys-8; H2BK6su = sumoylated Lys-8; H2BK7ac = acetylated Lys-9; H2BK7su = sumoylated Lys-9; H2BK11ac = acetylated Lys-15; H2BK16ac = acetylated Lys-25; H2BK16su = sumoylated Lys-25; H2BK17su = sumoylated Lys-26; H2BK123ub1 = monoubiquitinated Lys-134.</text>
</comment>
<reference key="1">
    <citation type="submission" date="2005-09" db="EMBL/GenBank/DDBJ databases">
        <title>Annotation of the Aspergillus terreus NIH2624 genome.</title>
        <authorList>
            <person name="Birren B.W."/>
            <person name="Lander E.S."/>
            <person name="Galagan J.E."/>
            <person name="Nusbaum C."/>
            <person name="Devon K."/>
            <person name="Henn M."/>
            <person name="Ma L.-J."/>
            <person name="Jaffe D.B."/>
            <person name="Butler J."/>
            <person name="Alvarez P."/>
            <person name="Gnerre S."/>
            <person name="Grabherr M."/>
            <person name="Kleber M."/>
            <person name="Mauceli E.W."/>
            <person name="Brockman W."/>
            <person name="Rounsley S."/>
            <person name="Young S.K."/>
            <person name="LaButti K."/>
            <person name="Pushparaj V."/>
            <person name="DeCaprio D."/>
            <person name="Crawford M."/>
            <person name="Koehrsen M."/>
            <person name="Engels R."/>
            <person name="Montgomery P."/>
            <person name="Pearson M."/>
            <person name="Howarth C."/>
            <person name="Larson L."/>
            <person name="Luoma S."/>
            <person name="White J."/>
            <person name="Alvarado L."/>
            <person name="Kodira C.D."/>
            <person name="Zeng Q."/>
            <person name="Oleary S."/>
            <person name="Yandava C."/>
            <person name="Denning D.W."/>
            <person name="Nierman W.C."/>
            <person name="Milne T."/>
            <person name="Madden K."/>
        </authorList>
    </citation>
    <scope>NUCLEOTIDE SEQUENCE [LARGE SCALE GENOMIC DNA]</scope>
    <source>
        <strain>NIH 2624 / FGSC A1156</strain>
    </source>
</reference>
<organism>
    <name type="scientific">Aspergillus terreus (strain NIH 2624 / FGSC A1156)</name>
    <dbReference type="NCBI Taxonomy" id="341663"/>
    <lineage>
        <taxon>Eukaryota</taxon>
        <taxon>Fungi</taxon>
        <taxon>Dikarya</taxon>
        <taxon>Ascomycota</taxon>
        <taxon>Pezizomycotina</taxon>
        <taxon>Eurotiomycetes</taxon>
        <taxon>Eurotiomycetidae</taxon>
        <taxon>Eurotiales</taxon>
        <taxon>Aspergillaceae</taxon>
        <taxon>Aspergillus</taxon>
        <taxon>Aspergillus subgen. Circumdati</taxon>
    </lineage>
</organism>
<name>H2B_ASPTN</name>